<feature type="chain" id="PRO_1000016172" description="Aspartyl/glutamyl-tRNA(Asn/Gln) amidotransferase subunit C">
    <location>
        <begin position="1"/>
        <end position="95"/>
    </location>
</feature>
<keyword id="KW-0067">ATP-binding</keyword>
<keyword id="KW-0436">Ligase</keyword>
<keyword id="KW-0547">Nucleotide-binding</keyword>
<keyword id="KW-0648">Protein biosynthesis</keyword>
<proteinExistence type="inferred from homology"/>
<gene>
    <name evidence="1" type="primary">gatC</name>
    <name type="ordered locus">NATL1_03141</name>
</gene>
<reference key="1">
    <citation type="journal article" date="2007" name="PLoS Genet.">
        <title>Patterns and implications of gene gain and loss in the evolution of Prochlorococcus.</title>
        <authorList>
            <person name="Kettler G.C."/>
            <person name="Martiny A.C."/>
            <person name="Huang K."/>
            <person name="Zucker J."/>
            <person name="Coleman M.L."/>
            <person name="Rodrigue S."/>
            <person name="Chen F."/>
            <person name="Lapidus A."/>
            <person name="Ferriera S."/>
            <person name="Johnson J."/>
            <person name="Steglich C."/>
            <person name="Church G.M."/>
            <person name="Richardson P."/>
            <person name="Chisholm S.W."/>
        </authorList>
    </citation>
    <scope>NUCLEOTIDE SEQUENCE [LARGE SCALE GENOMIC DNA]</scope>
    <source>
        <strain>NATL1A</strain>
    </source>
</reference>
<name>GATC_PROM1</name>
<protein>
    <recommendedName>
        <fullName evidence="1">Aspartyl/glutamyl-tRNA(Asn/Gln) amidotransferase subunit C</fullName>
        <shortName evidence="1">Asp/Glu-ADT subunit C</shortName>
        <ecNumber evidence="1">6.3.5.-</ecNumber>
    </recommendedName>
</protein>
<sequence>MTKISSSDVRKVAQLARLELPEDQIETYTEQLEEILSYVDQLQEIDTENIPPTTRAVEVVNSMRDDLVEVNCSREDLLNQAPHREGDFFRVPKIL</sequence>
<organism>
    <name type="scientific">Prochlorococcus marinus (strain NATL1A)</name>
    <dbReference type="NCBI Taxonomy" id="167555"/>
    <lineage>
        <taxon>Bacteria</taxon>
        <taxon>Bacillati</taxon>
        <taxon>Cyanobacteriota</taxon>
        <taxon>Cyanophyceae</taxon>
        <taxon>Synechococcales</taxon>
        <taxon>Prochlorococcaceae</taxon>
        <taxon>Prochlorococcus</taxon>
    </lineage>
</organism>
<evidence type="ECO:0000255" key="1">
    <source>
        <dbReference type="HAMAP-Rule" id="MF_00122"/>
    </source>
</evidence>
<dbReference type="EC" id="6.3.5.-" evidence="1"/>
<dbReference type="EMBL" id="CP000553">
    <property type="protein sequence ID" value="ABM74878.1"/>
    <property type="molecule type" value="Genomic_DNA"/>
</dbReference>
<dbReference type="RefSeq" id="WP_011823088.1">
    <property type="nucleotide sequence ID" value="NC_008819.1"/>
</dbReference>
<dbReference type="SMR" id="A2C068"/>
<dbReference type="KEGG" id="pme:NATL1_03141"/>
<dbReference type="eggNOG" id="COG0721">
    <property type="taxonomic scope" value="Bacteria"/>
</dbReference>
<dbReference type="HOGENOM" id="CLU_105899_2_0_3"/>
<dbReference type="Proteomes" id="UP000002592">
    <property type="component" value="Chromosome"/>
</dbReference>
<dbReference type="GO" id="GO:0050566">
    <property type="term" value="F:asparaginyl-tRNA synthase (glutamine-hydrolyzing) activity"/>
    <property type="evidence" value="ECO:0007669"/>
    <property type="project" value="RHEA"/>
</dbReference>
<dbReference type="GO" id="GO:0005524">
    <property type="term" value="F:ATP binding"/>
    <property type="evidence" value="ECO:0007669"/>
    <property type="project" value="UniProtKB-KW"/>
</dbReference>
<dbReference type="GO" id="GO:0050567">
    <property type="term" value="F:glutaminyl-tRNA synthase (glutamine-hydrolyzing) activity"/>
    <property type="evidence" value="ECO:0007669"/>
    <property type="project" value="UniProtKB-UniRule"/>
</dbReference>
<dbReference type="GO" id="GO:0070681">
    <property type="term" value="P:glutaminyl-tRNAGln biosynthesis via transamidation"/>
    <property type="evidence" value="ECO:0007669"/>
    <property type="project" value="TreeGrafter"/>
</dbReference>
<dbReference type="GO" id="GO:0006450">
    <property type="term" value="P:regulation of translational fidelity"/>
    <property type="evidence" value="ECO:0007669"/>
    <property type="project" value="InterPro"/>
</dbReference>
<dbReference type="GO" id="GO:0006412">
    <property type="term" value="P:translation"/>
    <property type="evidence" value="ECO:0007669"/>
    <property type="project" value="UniProtKB-UniRule"/>
</dbReference>
<dbReference type="Gene3D" id="1.10.20.60">
    <property type="entry name" value="Glu-tRNAGln amidotransferase C subunit, N-terminal domain"/>
    <property type="match status" value="1"/>
</dbReference>
<dbReference type="HAMAP" id="MF_00122">
    <property type="entry name" value="GatC"/>
    <property type="match status" value="1"/>
</dbReference>
<dbReference type="InterPro" id="IPR036113">
    <property type="entry name" value="Asp/Glu-ADT_sf_sub_c"/>
</dbReference>
<dbReference type="InterPro" id="IPR003837">
    <property type="entry name" value="GatC"/>
</dbReference>
<dbReference type="NCBIfam" id="TIGR00135">
    <property type="entry name" value="gatC"/>
    <property type="match status" value="1"/>
</dbReference>
<dbReference type="PANTHER" id="PTHR15004">
    <property type="entry name" value="GLUTAMYL-TRNA(GLN) AMIDOTRANSFERASE SUBUNIT C, MITOCHONDRIAL"/>
    <property type="match status" value="1"/>
</dbReference>
<dbReference type="PANTHER" id="PTHR15004:SF0">
    <property type="entry name" value="GLUTAMYL-TRNA(GLN) AMIDOTRANSFERASE SUBUNIT C, MITOCHONDRIAL"/>
    <property type="match status" value="1"/>
</dbReference>
<dbReference type="Pfam" id="PF02686">
    <property type="entry name" value="GatC"/>
    <property type="match status" value="1"/>
</dbReference>
<dbReference type="SUPFAM" id="SSF141000">
    <property type="entry name" value="Glu-tRNAGln amidotransferase C subunit"/>
    <property type="match status" value="1"/>
</dbReference>
<comment type="function">
    <text evidence="1">Allows the formation of correctly charged Asn-tRNA(Asn) or Gln-tRNA(Gln) through the transamidation of misacylated Asp-tRNA(Asn) or Glu-tRNA(Gln) in organisms which lack either or both of asparaginyl-tRNA or glutaminyl-tRNA synthetases. The reaction takes place in the presence of glutamine and ATP through an activated phospho-Asp-tRNA(Asn) or phospho-Glu-tRNA(Gln).</text>
</comment>
<comment type="catalytic activity">
    <reaction evidence="1">
        <text>L-glutamyl-tRNA(Gln) + L-glutamine + ATP + H2O = L-glutaminyl-tRNA(Gln) + L-glutamate + ADP + phosphate + H(+)</text>
        <dbReference type="Rhea" id="RHEA:17521"/>
        <dbReference type="Rhea" id="RHEA-COMP:9681"/>
        <dbReference type="Rhea" id="RHEA-COMP:9684"/>
        <dbReference type="ChEBI" id="CHEBI:15377"/>
        <dbReference type="ChEBI" id="CHEBI:15378"/>
        <dbReference type="ChEBI" id="CHEBI:29985"/>
        <dbReference type="ChEBI" id="CHEBI:30616"/>
        <dbReference type="ChEBI" id="CHEBI:43474"/>
        <dbReference type="ChEBI" id="CHEBI:58359"/>
        <dbReference type="ChEBI" id="CHEBI:78520"/>
        <dbReference type="ChEBI" id="CHEBI:78521"/>
        <dbReference type="ChEBI" id="CHEBI:456216"/>
    </reaction>
</comment>
<comment type="catalytic activity">
    <reaction evidence="1">
        <text>L-aspartyl-tRNA(Asn) + L-glutamine + ATP + H2O = L-asparaginyl-tRNA(Asn) + L-glutamate + ADP + phosphate + 2 H(+)</text>
        <dbReference type="Rhea" id="RHEA:14513"/>
        <dbReference type="Rhea" id="RHEA-COMP:9674"/>
        <dbReference type="Rhea" id="RHEA-COMP:9677"/>
        <dbReference type="ChEBI" id="CHEBI:15377"/>
        <dbReference type="ChEBI" id="CHEBI:15378"/>
        <dbReference type="ChEBI" id="CHEBI:29985"/>
        <dbReference type="ChEBI" id="CHEBI:30616"/>
        <dbReference type="ChEBI" id="CHEBI:43474"/>
        <dbReference type="ChEBI" id="CHEBI:58359"/>
        <dbReference type="ChEBI" id="CHEBI:78515"/>
        <dbReference type="ChEBI" id="CHEBI:78516"/>
        <dbReference type="ChEBI" id="CHEBI:456216"/>
    </reaction>
</comment>
<comment type="subunit">
    <text evidence="1">Heterotrimer of A, B and C subunits.</text>
</comment>
<comment type="similarity">
    <text evidence="1">Belongs to the GatC family.</text>
</comment>
<accession>A2C068</accession>